<accession>Q6MG12</accession>
<keyword id="KW-1185">Reference proteome</keyword>
<dbReference type="EMBL" id="BX883048">
    <property type="protein sequence ID" value="CAE84035.1"/>
    <property type="molecule type" value="Genomic_DNA"/>
</dbReference>
<dbReference type="EMBL" id="BC088194">
    <property type="protein sequence ID" value="AAH88194.1"/>
    <property type="molecule type" value="mRNA"/>
</dbReference>
<dbReference type="RefSeq" id="NP_998775.2">
    <property type="nucleotide sequence ID" value="NM_213610.3"/>
</dbReference>
<dbReference type="RefSeq" id="XP_063135066.1">
    <property type="nucleotide sequence ID" value="XM_063278996.1"/>
</dbReference>
<dbReference type="FunCoup" id="Q6MG12">
    <property type="interactions" value="434"/>
</dbReference>
<dbReference type="STRING" id="10116.ENSRNOP00000001077"/>
<dbReference type="jPOST" id="Q6MG12"/>
<dbReference type="PaxDb" id="10116-ENSRNOP00000001077"/>
<dbReference type="PeptideAtlas" id="Q6MG12"/>
<dbReference type="GeneID" id="294231"/>
<dbReference type="KEGG" id="rno:294231"/>
<dbReference type="UCSC" id="RGD:1302996">
    <property type="organism name" value="rat"/>
</dbReference>
<dbReference type="AGR" id="RGD:1302996"/>
<dbReference type="CTD" id="294231"/>
<dbReference type="RGD" id="1302996">
    <property type="gene designation" value="C20h6orf136"/>
</dbReference>
<dbReference type="eggNOG" id="KOG4457">
    <property type="taxonomic scope" value="Eukaryota"/>
</dbReference>
<dbReference type="InParanoid" id="Q6MG12"/>
<dbReference type="OrthoDB" id="44820at2759"/>
<dbReference type="PhylomeDB" id="Q6MG12"/>
<dbReference type="PRO" id="PR:Q6MG12"/>
<dbReference type="Proteomes" id="UP000002494">
    <property type="component" value="Unplaced"/>
</dbReference>
<dbReference type="InterPro" id="IPR018790">
    <property type="entry name" value="DUF2358"/>
</dbReference>
<dbReference type="PANTHER" id="PTHR31094">
    <property type="entry name" value="RIKEN CDNA 2310061I04 GENE"/>
    <property type="match status" value="1"/>
</dbReference>
<dbReference type="PANTHER" id="PTHR31094:SF2">
    <property type="entry name" value="RIKEN CDNA 2310061I04 GENE"/>
    <property type="match status" value="1"/>
</dbReference>
<dbReference type="Pfam" id="PF10184">
    <property type="entry name" value="DUF2358"/>
    <property type="match status" value="1"/>
</dbReference>
<organism>
    <name type="scientific">Rattus norvegicus</name>
    <name type="common">Rat</name>
    <dbReference type="NCBI Taxonomy" id="10116"/>
    <lineage>
        <taxon>Eukaryota</taxon>
        <taxon>Metazoa</taxon>
        <taxon>Chordata</taxon>
        <taxon>Craniata</taxon>
        <taxon>Vertebrata</taxon>
        <taxon>Euteleostomi</taxon>
        <taxon>Mammalia</taxon>
        <taxon>Eutheria</taxon>
        <taxon>Euarchontoglires</taxon>
        <taxon>Glires</taxon>
        <taxon>Rodentia</taxon>
        <taxon>Myomorpha</taxon>
        <taxon>Muroidea</taxon>
        <taxon>Muridae</taxon>
        <taxon>Murinae</taxon>
        <taxon>Rattus</taxon>
    </lineage>
</organism>
<name>CF136_RAT</name>
<reference key="1">
    <citation type="journal article" date="2004" name="Genome Res.">
        <title>The genomic sequence and comparative analysis of the rat major histocompatibility complex.</title>
        <authorList>
            <person name="Hurt P."/>
            <person name="Walter L."/>
            <person name="Sudbrak R."/>
            <person name="Klages S."/>
            <person name="Mueller I."/>
            <person name="Shiina T."/>
            <person name="Inoko H."/>
            <person name="Lehrach H."/>
            <person name="Guenther E."/>
            <person name="Reinhardt R."/>
            <person name="Himmelbauer H."/>
        </authorList>
    </citation>
    <scope>NUCLEOTIDE SEQUENCE [LARGE SCALE GENOMIC DNA]</scope>
    <source>
        <strain>Brown Norway</strain>
    </source>
</reference>
<reference key="2">
    <citation type="journal article" date="2004" name="Genome Res.">
        <title>The status, quality, and expansion of the NIH full-length cDNA project: the Mammalian Gene Collection (MGC).</title>
        <authorList>
            <consortium name="The MGC Project Team"/>
        </authorList>
    </citation>
    <scope>NUCLEOTIDE SEQUENCE [LARGE SCALE MRNA]</scope>
    <source>
        <tissue>Spleen</tissue>
    </source>
</reference>
<feature type="chain" id="PRO_0000089533" description="Uncharacterized protein C6orf136 homolog">
    <location>
        <begin position="1"/>
        <end position="172"/>
    </location>
</feature>
<proteinExistence type="evidence at transcript level"/>
<sequence>MEEHLAVMHERLRQELPTLFLRSHDYTIYSMDVEFINEILNVRTKGRTFYVMSLTLCRFLAWNYFAQFRLEILQLTRHPENWTLQARWRLIGLPVHMLFLRFYRRDKEDLYRTFDAFSTFYLNSSGLICRHHLDKLMPSHSPSTPVKKLLVGALVALGLSEPEPSLHLCSKT</sequence>
<protein>
    <recommendedName>
        <fullName>Uncharacterized protein C6orf136 homolog</fullName>
    </recommendedName>
</protein>